<evidence type="ECO:0000255" key="1">
    <source>
        <dbReference type="HAMAP-Rule" id="MF_01691"/>
    </source>
</evidence>
<evidence type="ECO:0007829" key="2">
    <source>
        <dbReference type="PDB" id="3CJ8"/>
    </source>
</evidence>
<feature type="chain" id="PRO_0000376656" description="2,3,4,5-tetrahydropyridine-2,6-dicarboxylate N-acetyltransferase">
    <location>
        <begin position="1"/>
        <end position="233"/>
    </location>
</feature>
<feature type="helix" evidence="2">
    <location>
        <begin position="2"/>
        <end position="12"/>
    </location>
</feature>
<feature type="strand" evidence="2">
    <location>
        <begin position="18"/>
        <end position="25"/>
    </location>
</feature>
<feature type="strand" evidence="2">
    <location>
        <begin position="36"/>
        <end position="40"/>
    </location>
</feature>
<feature type="strand" evidence="2">
    <location>
        <begin position="42"/>
        <end position="50"/>
    </location>
</feature>
<feature type="helix" evidence="2">
    <location>
        <begin position="51"/>
        <end position="60"/>
    </location>
</feature>
<feature type="turn" evidence="2">
    <location>
        <begin position="61"/>
        <end position="64"/>
    </location>
</feature>
<feature type="strand" evidence="2">
    <location>
        <begin position="65"/>
        <end position="72"/>
    </location>
</feature>
<feature type="strand" evidence="2">
    <location>
        <begin position="75"/>
        <end position="77"/>
    </location>
</feature>
<feature type="strand" evidence="2">
    <location>
        <begin position="88"/>
        <end position="91"/>
    </location>
</feature>
<feature type="strand" evidence="2">
    <location>
        <begin position="96"/>
        <end position="100"/>
    </location>
</feature>
<feature type="strand" evidence="2">
    <location>
        <begin position="203"/>
        <end position="206"/>
    </location>
</feature>
<feature type="turn" evidence="2">
    <location>
        <begin position="207"/>
        <end position="210"/>
    </location>
</feature>
<feature type="strand" evidence="2">
    <location>
        <begin position="211"/>
        <end position="215"/>
    </location>
</feature>
<sequence length="233" mass="24618">MDAYEIIQYIGDAKKQTLVKVTLKGQLKEVTFPETIKVFNNCKTGTLFGDWADVKPFLEANKEKIEDYVVENDARNSAIPFLDLKDINARIEPGALIREKVEIGDQAVIMMGAILNIGAVVGAGTMIDMGAVLGGRATVGKHCHIGAGTVLAGVIEPPSAAPVVIENEVVIGANAVVLEGVRVGEGAVVAAGAVVVEDVPAHTVVAGVPAKVIKQIDDKTKSKTEILEELRKL</sequence>
<keyword id="KW-0002">3D-structure</keyword>
<keyword id="KW-0012">Acyltransferase</keyword>
<keyword id="KW-0028">Amino-acid biosynthesis</keyword>
<keyword id="KW-0220">Diaminopimelate biosynthesis</keyword>
<keyword id="KW-0457">Lysine biosynthesis</keyword>
<keyword id="KW-1185">Reference proteome</keyword>
<keyword id="KW-0677">Repeat</keyword>
<keyword id="KW-0808">Transferase</keyword>
<name>DAPH_ENTFA</name>
<dbReference type="EC" id="2.3.1.89" evidence="1"/>
<dbReference type="EMBL" id="AE016830">
    <property type="protein sequence ID" value="AAO80933.1"/>
    <property type="molecule type" value="Genomic_DNA"/>
</dbReference>
<dbReference type="RefSeq" id="NP_814863.1">
    <property type="nucleotide sequence ID" value="NC_004668.1"/>
</dbReference>
<dbReference type="PDB" id="3CJ8">
    <property type="method" value="X-ray"/>
    <property type="resolution" value="1.95 A"/>
    <property type="chains" value="A/B/C=2-233"/>
</dbReference>
<dbReference type="PDBsum" id="3CJ8"/>
<dbReference type="SMR" id="Q836H8"/>
<dbReference type="STRING" id="226185.EF_1133"/>
<dbReference type="EnsemblBacteria" id="AAO80933">
    <property type="protein sequence ID" value="AAO80933"/>
    <property type="gene ID" value="EF_1133"/>
</dbReference>
<dbReference type="KEGG" id="efa:EF1133"/>
<dbReference type="PATRIC" id="fig|226185.45.peg.2362"/>
<dbReference type="eggNOG" id="COG2171">
    <property type="taxonomic scope" value="Bacteria"/>
</dbReference>
<dbReference type="HOGENOM" id="CLU_103751_0_0_9"/>
<dbReference type="UniPathway" id="UPA00034">
    <property type="reaction ID" value="UER00022"/>
</dbReference>
<dbReference type="EvolutionaryTrace" id="Q836H8"/>
<dbReference type="Proteomes" id="UP000001415">
    <property type="component" value="Chromosome"/>
</dbReference>
<dbReference type="GO" id="GO:0047200">
    <property type="term" value="F:tetrahydrodipicolinate N-acetyltransferase activity"/>
    <property type="evidence" value="ECO:0007669"/>
    <property type="project" value="UniProtKB-EC"/>
</dbReference>
<dbReference type="GO" id="GO:0019877">
    <property type="term" value="P:diaminopimelate biosynthetic process"/>
    <property type="evidence" value="ECO:0007669"/>
    <property type="project" value="UniProtKB-UniRule"/>
</dbReference>
<dbReference type="GO" id="GO:0009089">
    <property type="term" value="P:lysine biosynthetic process via diaminopimelate"/>
    <property type="evidence" value="ECO:0007669"/>
    <property type="project" value="UniProtKB-UniRule"/>
</dbReference>
<dbReference type="Gene3D" id="2.160.10.10">
    <property type="entry name" value="Hexapeptide repeat proteins"/>
    <property type="match status" value="1"/>
</dbReference>
<dbReference type="Gene3D" id="3.30.70.250">
    <property type="entry name" value="Malonyl-CoA ACP transacylase, ACP-binding"/>
    <property type="match status" value="1"/>
</dbReference>
<dbReference type="HAMAP" id="MF_01691">
    <property type="entry name" value="DapH"/>
    <property type="match status" value="1"/>
</dbReference>
<dbReference type="InterPro" id="IPR019873">
    <property type="entry name" value="DapH"/>
</dbReference>
<dbReference type="InterPro" id="IPR013710">
    <property type="entry name" value="DapH_N"/>
</dbReference>
<dbReference type="InterPro" id="IPR001451">
    <property type="entry name" value="Hexapep"/>
</dbReference>
<dbReference type="InterPro" id="IPR018357">
    <property type="entry name" value="Hexapep_transf_CS"/>
</dbReference>
<dbReference type="InterPro" id="IPR050179">
    <property type="entry name" value="Trans_hexapeptide_repeat"/>
</dbReference>
<dbReference type="InterPro" id="IPR011004">
    <property type="entry name" value="Trimer_LpxA-like_sf"/>
</dbReference>
<dbReference type="NCBIfam" id="TIGR03532">
    <property type="entry name" value="DapD_Ac"/>
    <property type="match status" value="1"/>
</dbReference>
<dbReference type="PANTHER" id="PTHR43300:SF10">
    <property type="entry name" value="2,3,4,5-TETRAHYDROPYRIDINE-2,6-DICARBOXYLATE N-ACETYLTRANSFERASE"/>
    <property type="match status" value="1"/>
</dbReference>
<dbReference type="PANTHER" id="PTHR43300">
    <property type="entry name" value="ACETYLTRANSFERASE"/>
    <property type="match status" value="1"/>
</dbReference>
<dbReference type="Pfam" id="PF08503">
    <property type="entry name" value="DapH_N"/>
    <property type="match status" value="1"/>
</dbReference>
<dbReference type="Pfam" id="PF00132">
    <property type="entry name" value="Hexapep"/>
    <property type="match status" value="1"/>
</dbReference>
<dbReference type="Pfam" id="PF14602">
    <property type="entry name" value="Hexapep_2"/>
    <property type="match status" value="1"/>
</dbReference>
<dbReference type="SUPFAM" id="SSF51161">
    <property type="entry name" value="Trimeric LpxA-like enzymes"/>
    <property type="match status" value="1"/>
</dbReference>
<dbReference type="PROSITE" id="PS00101">
    <property type="entry name" value="HEXAPEP_TRANSFERASES"/>
    <property type="match status" value="1"/>
</dbReference>
<proteinExistence type="evidence at protein level"/>
<reference key="1">
    <citation type="journal article" date="2003" name="Science">
        <title>Role of mobile DNA in the evolution of vancomycin-resistant Enterococcus faecalis.</title>
        <authorList>
            <person name="Paulsen I.T."/>
            <person name="Banerjei L."/>
            <person name="Myers G.S.A."/>
            <person name="Nelson K.E."/>
            <person name="Seshadri R."/>
            <person name="Read T.D."/>
            <person name="Fouts D.E."/>
            <person name="Eisen J.A."/>
            <person name="Gill S.R."/>
            <person name="Heidelberg J.F."/>
            <person name="Tettelin H."/>
            <person name="Dodson R.J."/>
            <person name="Umayam L.A."/>
            <person name="Brinkac L.M."/>
            <person name="Beanan M.J."/>
            <person name="Daugherty S.C."/>
            <person name="DeBoy R.T."/>
            <person name="Durkin S.A."/>
            <person name="Kolonay J.F."/>
            <person name="Madupu R."/>
            <person name="Nelson W.C."/>
            <person name="Vamathevan J.J."/>
            <person name="Tran B."/>
            <person name="Upton J."/>
            <person name="Hansen T."/>
            <person name="Shetty J."/>
            <person name="Khouri H.M."/>
            <person name="Utterback T.R."/>
            <person name="Radune D."/>
            <person name="Ketchum K.A."/>
            <person name="Dougherty B.A."/>
            <person name="Fraser C.M."/>
        </authorList>
    </citation>
    <scope>NUCLEOTIDE SEQUENCE [LARGE SCALE GENOMIC DNA]</scope>
    <source>
        <strain>ATCC 700802 / V583</strain>
    </source>
</reference>
<protein>
    <recommendedName>
        <fullName evidence="1">2,3,4,5-tetrahydropyridine-2,6-dicarboxylate N-acetyltransferase</fullName>
        <ecNumber evidence="1">2.3.1.89</ecNumber>
    </recommendedName>
    <alternativeName>
        <fullName evidence="1">Tetrahydrodipicolinate N-acetyltransferase</fullName>
        <shortName evidence="1">THP acetyltransferase</shortName>
        <shortName evidence="1">Tetrahydropicolinate acetylase</shortName>
    </alternativeName>
</protein>
<comment type="function">
    <text evidence="1">Catalyzes the transfer of an acetyl group from acetyl-CoA to tetrahydrodipicolinate.</text>
</comment>
<comment type="catalytic activity">
    <reaction evidence="1">
        <text>(S)-2,3,4,5-tetrahydrodipicolinate + acetyl-CoA + H2O = L-2-acetamido-6-oxoheptanedioate + CoA</text>
        <dbReference type="Rhea" id="RHEA:13085"/>
        <dbReference type="ChEBI" id="CHEBI:15377"/>
        <dbReference type="ChEBI" id="CHEBI:16845"/>
        <dbReference type="ChEBI" id="CHEBI:57287"/>
        <dbReference type="ChEBI" id="CHEBI:57288"/>
        <dbReference type="ChEBI" id="CHEBI:58117"/>
        <dbReference type="EC" id="2.3.1.89"/>
    </reaction>
</comment>
<comment type="pathway">
    <text evidence="1">Amino-acid biosynthesis; L-lysine biosynthesis via DAP pathway; LL-2,6-diaminopimelate from (S)-tetrahydrodipicolinate (acetylase route): step 1/3.</text>
</comment>
<comment type="similarity">
    <text evidence="1">Belongs to the transferase hexapeptide repeat family. DapH subfamily.</text>
</comment>
<gene>
    <name evidence="1" type="primary">dapH</name>
    <name type="ordered locus">EF_1133</name>
</gene>
<accession>Q836H8</accession>
<organism>
    <name type="scientific">Enterococcus faecalis (strain ATCC 700802 / V583)</name>
    <dbReference type="NCBI Taxonomy" id="226185"/>
    <lineage>
        <taxon>Bacteria</taxon>
        <taxon>Bacillati</taxon>
        <taxon>Bacillota</taxon>
        <taxon>Bacilli</taxon>
        <taxon>Lactobacillales</taxon>
        <taxon>Enterococcaceae</taxon>
        <taxon>Enterococcus</taxon>
    </lineage>
</organism>